<reference key="1">
    <citation type="journal article" date="2006" name="BMC Genomics">
        <title>Complete plastid genome sequence of Daucus carota: implications for biotechnology and phylogeny of angiosperms.</title>
        <authorList>
            <person name="Ruhlman T."/>
            <person name="Lee S.-B."/>
            <person name="Jansen R.K."/>
            <person name="Hostetler J.B."/>
            <person name="Tallon L.J."/>
            <person name="Town C.D."/>
            <person name="Daniell H."/>
        </authorList>
    </citation>
    <scope>NUCLEOTIDE SEQUENCE [LARGE SCALE GENOMIC DNA]</scope>
    <source>
        <strain>cv. Danvers Half-long</strain>
    </source>
</reference>
<feature type="chain" id="PRO_0000276720" description="Small ribosomal subunit protein uS8c">
    <location>
        <begin position="1"/>
        <end position="134"/>
    </location>
</feature>
<gene>
    <name type="primary">rps8</name>
</gene>
<evidence type="ECO:0000250" key="1"/>
<evidence type="ECO:0000305" key="2"/>
<protein>
    <recommendedName>
        <fullName evidence="2">Small ribosomal subunit protein uS8c</fullName>
    </recommendedName>
    <alternativeName>
        <fullName>30S ribosomal protein S8, chloroplastic</fullName>
    </alternativeName>
</protein>
<proteinExistence type="inferred from homology"/>
<sequence length="134" mass="15781">MGRDIIADIITSIRNADMDRKRAVRIASTNITENIVKILLREGFIENVRKHKETKKDFLVLTLRHRRNRKRSYRNFLNLKRISRPGLRIYSNYQRIPRILGGMGIVIISTSRGIMTDREARLERIGGEVLCYIW</sequence>
<keyword id="KW-0150">Chloroplast</keyword>
<keyword id="KW-0934">Plastid</keyword>
<keyword id="KW-0687">Ribonucleoprotein</keyword>
<keyword id="KW-0689">Ribosomal protein</keyword>
<keyword id="KW-0694">RNA-binding</keyword>
<keyword id="KW-0699">rRNA-binding</keyword>
<name>RR8_DAUCA</name>
<geneLocation type="chloroplast"/>
<dbReference type="EMBL" id="DQ898156">
    <property type="protein sequence ID" value="ABI32459.1"/>
    <property type="molecule type" value="Genomic_DNA"/>
</dbReference>
<dbReference type="RefSeq" id="YP_740153.1">
    <property type="nucleotide sequence ID" value="NC_008325.1"/>
</dbReference>
<dbReference type="SMR" id="Q0G9S6"/>
<dbReference type="GeneID" id="4266780"/>
<dbReference type="OMA" id="NSAYHDT"/>
<dbReference type="GO" id="GO:0009507">
    <property type="term" value="C:chloroplast"/>
    <property type="evidence" value="ECO:0007669"/>
    <property type="project" value="UniProtKB-SubCell"/>
</dbReference>
<dbReference type="GO" id="GO:1990904">
    <property type="term" value="C:ribonucleoprotein complex"/>
    <property type="evidence" value="ECO:0007669"/>
    <property type="project" value="UniProtKB-KW"/>
</dbReference>
<dbReference type="GO" id="GO:0005840">
    <property type="term" value="C:ribosome"/>
    <property type="evidence" value="ECO:0007669"/>
    <property type="project" value="UniProtKB-KW"/>
</dbReference>
<dbReference type="GO" id="GO:0019843">
    <property type="term" value="F:rRNA binding"/>
    <property type="evidence" value="ECO:0007669"/>
    <property type="project" value="UniProtKB-UniRule"/>
</dbReference>
<dbReference type="GO" id="GO:0003735">
    <property type="term" value="F:structural constituent of ribosome"/>
    <property type="evidence" value="ECO:0007669"/>
    <property type="project" value="InterPro"/>
</dbReference>
<dbReference type="GO" id="GO:0006412">
    <property type="term" value="P:translation"/>
    <property type="evidence" value="ECO:0007669"/>
    <property type="project" value="UniProtKB-UniRule"/>
</dbReference>
<dbReference type="FunFam" id="3.30.1490.10:FF:000001">
    <property type="entry name" value="30S ribosomal protein S8"/>
    <property type="match status" value="1"/>
</dbReference>
<dbReference type="FunFam" id="3.30.1370.30:FF:000004">
    <property type="entry name" value="30S ribosomal protein S8, chloroplastic"/>
    <property type="match status" value="1"/>
</dbReference>
<dbReference type="Gene3D" id="3.30.1370.30">
    <property type="match status" value="1"/>
</dbReference>
<dbReference type="Gene3D" id="3.30.1490.10">
    <property type="match status" value="1"/>
</dbReference>
<dbReference type="HAMAP" id="MF_01302_B">
    <property type="entry name" value="Ribosomal_uS8_B"/>
    <property type="match status" value="1"/>
</dbReference>
<dbReference type="InterPro" id="IPR000630">
    <property type="entry name" value="Ribosomal_uS8"/>
</dbReference>
<dbReference type="InterPro" id="IPR047863">
    <property type="entry name" value="Ribosomal_uS8_CS"/>
</dbReference>
<dbReference type="InterPro" id="IPR035987">
    <property type="entry name" value="Ribosomal_uS8_sf"/>
</dbReference>
<dbReference type="NCBIfam" id="NF001109">
    <property type="entry name" value="PRK00136.1"/>
    <property type="match status" value="1"/>
</dbReference>
<dbReference type="PANTHER" id="PTHR11758">
    <property type="entry name" value="40S RIBOSOMAL PROTEIN S15A"/>
    <property type="match status" value="1"/>
</dbReference>
<dbReference type="Pfam" id="PF00410">
    <property type="entry name" value="Ribosomal_S8"/>
    <property type="match status" value="1"/>
</dbReference>
<dbReference type="SUPFAM" id="SSF56047">
    <property type="entry name" value="Ribosomal protein S8"/>
    <property type="match status" value="1"/>
</dbReference>
<dbReference type="PROSITE" id="PS00053">
    <property type="entry name" value="RIBOSOMAL_S8"/>
    <property type="match status" value="1"/>
</dbReference>
<organism>
    <name type="scientific">Daucus carota</name>
    <name type="common">Wild carrot</name>
    <dbReference type="NCBI Taxonomy" id="4039"/>
    <lineage>
        <taxon>Eukaryota</taxon>
        <taxon>Viridiplantae</taxon>
        <taxon>Streptophyta</taxon>
        <taxon>Embryophyta</taxon>
        <taxon>Tracheophyta</taxon>
        <taxon>Spermatophyta</taxon>
        <taxon>Magnoliopsida</taxon>
        <taxon>eudicotyledons</taxon>
        <taxon>Gunneridae</taxon>
        <taxon>Pentapetalae</taxon>
        <taxon>asterids</taxon>
        <taxon>campanulids</taxon>
        <taxon>Apiales</taxon>
        <taxon>Apiaceae</taxon>
        <taxon>Apioideae</taxon>
        <taxon>Scandiceae</taxon>
        <taxon>Daucinae</taxon>
        <taxon>Daucus</taxon>
        <taxon>Daucus sect. Daucus</taxon>
    </lineage>
</organism>
<comment type="function">
    <text evidence="1">One of the primary rRNA binding proteins, it binds directly to 16S rRNA central domain where it helps coordinate assembly of the platform of the 30S subunit.</text>
</comment>
<comment type="subunit">
    <text evidence="1">Part of the 30S ribosomal subunit.</text>
</comment>
<comment type="subcellular location">
    <subcellularLocation>
        <location>Plastid</location>
        <location>Chloroplast</location>
    </subcellularLocation>
</comment>
<comment type="similarity">
    <text evidence="2">Belongs to the universal ribosomal protein uS8 family.</text>
</comment>
<accession>Q0G9S6</accession>